<feature type="chain" id="PRO_1000059658" description="Chaperone protein DnaK">
    <location>
        <begin position="1"/>
        <end position="637"/>
    </location>
</feature>
<feature type="region of interest" description="Disordered" evidence="2">
    <location>
        <begin position="604"/>
        <end position="637"/>
    </location>
</feature>
<feature type="compositionally biased region" description="Low complexity" evidence="2">
    <location>
        <begin position="604"/>
        <end position="617"/>
    </location>
</feature>
<feature type="compositionally biased region" description="Acidic residues" evidence="2">
    <location>
        <begin position="623"/>
        <end position="637"/>
    </location>
</feature>
<feature type="modified residue" description="Phosphothreonine; by autocatalysis" evidence="1">
    <location>
        <position position="198"/>
    </location>
</feature>
<gene>
    <name evidence="1" type="primary">dnaK</name>
    <name type="ordered locus">Sama_2511</name>
</gene>
<organism>
    <name type="scientific">Shewanella amazonensis (strain ATCC BAA-1098 / SB2B)</name>
    <dbReference type="NCBI Taxonomy" id="326297"/>
    <lineage>
        <taxon>Bacteria</taxon>
        <taxon>Pseudomonadati</taxon>
        <taxon>Pseudomonadota</taxon>
        <taxon>Gammaproteobacteria</taxon>
        <taxon>Alteromonadales</taxon>
        <taxon>Shewanellaceae</taxon>
        <taxon>Shewanella</taxon>
    </lineage>
</organism>
<protein>
    <recommendedName>
        <fullName evidence="1">Chaperone protein DnaK</fullName>
    </recommendedName>
    <alternativeName>
        <fullName evidence="1">HSP70</fullName>
    </alternativeName>
    <alternativeName>
        <fullName evidence="1">Heat shock 70 kDa protein</fullName>
    </alternativeName>
    <alternativeName>
        <fullName evidence="1">Heat shock protein 70</fullName>
    </alternativeName>
</protein>
<proteinExistence type="inferred from homology"/>
<dbReference type="EMBL" id="CP000507">
    <property type="protein sequence ID" value="ABM00714.1"/>
    <property type="molecule type" value="Genomic_DNA"/>
</dbReference>
<dbReference type="RefSeq" id="WP_011760620.1">
    <property type="nucleotide sequence ID" value="NC_008700.1"/>
</dbReference>
<dbReference type="SMR" id="A1S8K7"/>
<dbReference type="STRING" id="326297.Sama_2511"/>
<dbReference type="KEGG" id="saz:Sama_2511"/>
<dbReference type="eggNOG" id="COG0443">
    <property type="taxonomic scope" value="Bacteria"/>
</dbReference>
<dbReference type="HOGENOM" id="CLU_005965_2_1_6"/>
<dbReference type="OrthoDB" id="9766019at2"/>
<dbReference type="Proteomes" id="UP000009175">
    <property type="component" value="Chromosome"/>
</dbReference>
<dbReference type="GO" id="GO:0005524">
    <property type="term" value="F:ATP binding"/>
    <property type="evidence" value="ECO:0007669"/>
    <property type="project" value="UniProtKB-UniRule"/>
</dbReference>
<dbReference type="GO" id="GO:0140662">
    <property type="term" value="F:ATP-dependent protein folding chaperone"/>
    <property type="evidence" value="ECO:0007669"/>
    <property type="project" value="InterPro"/>
</dbReference>
<dbReference type="GO" id="GO:0051082">
    <property type="term" value="F:unfolded protein binding"/>
    <property type="evidence" value="ECO:0007669"/>
    <property type="project" value="InterPro"/>
</dbReference>
<dbReference type="CDD" id="cd10234">
    <property type="entry name" value="ASKHA_NBD_HSP70_DnaK-like"/>
    <property type="match status" value="1"/>
</dbReference>
<dbReference type="FunFam" id="2.60.34.10:FF:000014">
    <property type="entry name" value="Chaperone protein DnaK HSP70"/>
    <property type="match status" value="1"/>
</dbReference>
<dbReference type="FunFam" id="1.20.1270.10:FF:000001">
    <property type="entry name" value="Molecular chaperone DnaK"/>
    <property type="match status" value="1"/>
</dbReference>
<dbReference type="FunFam" id="3.30.420.40:FF:000004">
    <property type="entry name" value="Molecular chaperone DnaK"/>
    <property type="match status" value="1"/>
</dbReference>
<dbReference type="FunFam" id="3.90.640.10:FF:000003">
    <property type="entry name" value="Molecular chaperone DnaK"/>
    <property type="match status" value="1"/>
</dbReference>
<dbReference type="Gene3D" id="1.20.1270.10">
    <property type="match status" value="1"/>
</dbReference>
<dbReference type="Gene3D" id="3.30.420.40">
    <property type="match status" value="2"/>
</dbReference>
<dbReference type="Gene3D" id="3.90.640.10">
    <property type="entry name" value="Actin, Chain A, domain 4"/>
    <property type="match status" value="1"/>
</dbReference>
<dbReference type="Gene3D" id="2.60.34.10">
    <property type="entry name" value="Substrate Binding Domain Of DNAk, Chain A, domain 1"/>
    <property type="match status" value="1"/>
</dbReference>
<dbReference type="HAMAP" id="MF_00332">
    <property type="entry name" value="DnaK"/>
    <property type="match status" value="1"/>
</dbReference>
<dbReference type="InterPro" id="IPR043129">
    <property type="entry name" value="ATPase_NBD"/>
</dbReference>
<dbReference type="InterPro" id="IPR012725">
    <property type="entry name" value="Chaperone_DnaK"/>
</dbReference>
<dbReference type="InterPro" id="IPR018181">
    <property type="entry name" value="Heat_shock_70_CS"/>
</dbReference>
<dbReference type="InterPro" id="IPR029048">
    <property type="entry name" value="HSP70_C_sf"/>
</dbReference>
<dbReference type="InterPro" id="IPR029047">
    <property type="entry name" value="HSP70_peptide-bd_sf"/>
</dbReference>
<dbReference type="InterPro" id="IPR013126">
    <property type="entry name" value="Hsp_70_fam"/>
</dbReference>
<dbReference type="NCBIfam" id="NF001413">
    <property type="entry name" value="PRK00290.1"/>
    <property type="match status" value="1"/>
</dbReference>
<dbReference type="NCBIfam" id="NF003520">
    <property type="entry name" value="PRK05183.1"/>
    <property type="match status" value="1"/>
</dbReference>
<dbReference type="NCBIfam" id="TIGR02350">
    <property type="entry name" value="prok_dnaK"/>
    <property type="match status" value="1"/>
</dbReference>
<dbReference type="PANTHER" id="PTHR19375">
    <property type="entry name" value="HEAT SHOCK PROTEIN 70KDA"/>
    <property type="match status" value="1"/>
</dbReference>
<dbReference type="Pfam" id="PF00012">
    <property type="entry name" value="HSP70"/>
    <property type="match status" value="1"/>
</dbReference>
<dbReference type="PRINTS" id="PR00301">
    <property type="entry name" value="HEATSHOCK70"/>
</dbReference>
<dbReference type="SUPFAM" id="SSF53067">
    <property type="entry name" value="Actin-like ATPase domain"/>
    <property type="match status" value="2"/>
</dbReference>
<dbReference type="SUPFAM" id="SSF100920">
    <property type="entry name" value="Heat shock protein 70kD (HSP70), peptide-binding domain"/>
    <property type="match status" value="1"/>
</dbReference>
<dbReference type="PROSITE" id="PS00297">
    <property type="entry name" value="HSP70_1"/>
    <property type="match status" value="1"/>
</dbReference>
<dbReference type="PROSITE" id="PS00329">
    <property type="entry name" value="HSP70_2"/>
    <property type="match status" value="1"/>
</dbReference>
<dbReference type="PROSITE" id="PS01036">
    <property type="entry name" value="HSP70_3"/>
    <property type="match status" value="1"/>
</dbReference>
<reference key="1">
    <citation type="submission" date="2006-12" db="EMBL/GenBank/DDBJ databases">
        <title>Complete sequence of Shewanella amazonensis SB2B.</title>
        <authorList>
            <consortium name="US DOE Joint Genome Institute"/>
            <person name="Copeland A."/>
            <person name="Lucas S."/>
            <person name="Lapidus A."/>
            <person name="Barry K."/>
            <person name="Detter J.C."/>
            <person name="Glavina del Rio T."/>
            <person name="Hammon N."/>
            <person name="Israni S."/>
            <person name="Dalin E."/>
            <person name="Tice H."/>
            <person name="Pitluck S."/>
            <person name="Munk A.C."/>
            <person name="Brettin T."/>
            <person name="Bruce D."/>
            <person name="Han C."/>
            <person name="Tapia R."/>
            <person name="Gilna P."/>
            <person name="Schmutz J."/>
            <person name="Larimer F."/>
            <person name="Land M."/>
            <person name="Hauser L."/>
            <person name="Kyrpides N."/>
            <person name="Mikhailova N."/>
            <person name="Fredrickson J."/>
            <person name="Richardson P."/>
        </authorList>
    </citation>
    <scope>NUCLEOTIDE SEQUENCE [LARGE SCALE GENOMIC DNA]</scope>
    <source>
        <strain>ATCC BAA-1098 / SB2B</strain>
    </source>
</reference>
<evidence type="ECO:0000255" key="1">
    <source>
        <dbReference type="HAMAP-Rule" id="MF_00332"/>
    </source>
</evidence>
<evidence type="ECO:0000256" key="2">
    <source>
        <dbReference type="SAM" id="MobiDB-lite"/>
    </source>
</evidence>
<keyword id="KW-0067">ATP-binding</keyword>
<keyword id="KW-0143">Chaperone</keyword>
<keyword id="KW-0547">Nucleotide-binding</keyword>
<keyword id="KW-0597">Phosphoprotein</keyword>
<keyword id="KW-1185">Reference proteome</keyword>
<keyword id="KW-0346">Stress response</keyword>
<comment type="function">
    <text evidence="1">Acts as a chaperone.</text>
</comment>
<comment type="induction">
    <text evidence="1">By stress conditions e.g. heat shock.</text>
</comment>
<comment type="similarity">
    <text evidence="1">Belongs to the heat shock protein 70 family.</text>
</comment>
<accession>A1S8K7</accession>
<sequence>MGKIIGIDLGTTNSCVAVLDGGKARVIENAEGDRTTPSIIAFTEDETLVGQPAKRQAVTNPTNTFFAIKRLIGRRFKDDEVQRDVNIMPFKIIQADNGDAWVESRGKKMAPPQVSAEVLKKMKKTAEDFLGEEVTEAVITVPAYFNDAQRQATKDAGRIAGLDVKRIINEPTAAALAYGIDKKQGDNIVAVYDLGGGTFDISIIEIDNNDGDQTFEVLATNGDTHLGGEDFDNRLINYLADEFKKEQGLDLRNDPLAMQRLKEAAEKAKIELSSTNQTEVNLPYITADATGPKHLVVKVTRAKLESLVEDLIQRSLEPLKVALADADLSVSDINEVILVGGQTRMPKVQEAVTNFFGKEPRKDVNPDEAVAVGAAVQAGVLAGDVKDVLLLDVTPLSLGIETMGSVMTKLIEKNTTIPTKASQVFSTADDNQSAVTIHVLQGERKQASANKSLGQFNLEGIEPAPRGMPQIEVTFDIDADGILHVSAKDKKTGKEQKITIKASSGLSDEEVAQMVRDAEAHADEDKKFEELAQARNQADGLVHATKKQVEEAGDALGSDDKAKIEAAIAEVEKAVKGNDKEAIDTATQSLIEASAKLVEIAQAKAQGAQSSAQGSSAEKTADDVVDAEFEEVKDDKK</sequence>
<name>DNAK_SHEAM</name>